<gene>
    <name evidence="1" type="primary">ileS</name>
    <name type="ordered locus">BCG9842_B1245</name>
</gene>
<feature type="chain" id="PRO_1000189124" description="Isoleucine--tRNA ligase">
    <location>
        <begin position="1"/>
        <end position="921"/>
    </location>
</feature>
<feature type="short sequence motif" description="'HIGH' region">
    <location>
        <begin position="57"/>
        <end position="67"/>
    </location>
</feature>
<feature type="short sequence motif" description="'KMSKS' region">
    <location>
        <begin position="593"/>
        <end position="597"/>
    </location>
</feature>
<feature type="binding site" evidence="1">
    <location>
        <position position="552"/>
    </location>
    <ligand>
        <name>L-isoleucyl-5'-AMP</name>
        <dbReference type="ChEBI" id="CHEBI:178002"/>
    </ligand>
</feature>
<feature type="binding site" evidence="1">
    <location>
        <position position="596"/>
    </location>
    <ligand>
        <name>ATP</name>
        <dbReference type="ChEBI" id="CHEBI:30616"/>
    </ligand>
</feature>
<feature type="binding site" evidence="1">
    <location>
        <position position="888"/>
    </location>
    <ligand>
        <name>Zn(2+)</name>
        <dbReference type="ChEBI" id="CHEBI:29105"/>
    </ligand>
</feature>
<feature type="binding site" evidence="1">
    <location>
        <position position="891"/>
    </location>
    <ligand>
        <name>Zn(2+)</name>
        <dbReference type="ChEBI" id="CHEBI:29105"/>
    </ligand>
</feature>
<feature type="binding site" evidence="1">
    <location>
        <position position="908"/>
    </location>
    <ligand>
        <name>Zn(2+)</name>
        <dbReference type="ChEBI" id="CHEBI:29105"/>
    </ligand>
</feature>
<feature type="binding site" evidence="1">
    <location>
        <position position="911"/>
    </location>
    <ligand>
        <name>Zn(2+)</name>
        <dbReference type="ChEBI" id="CHEBI:29105"/>
    </ligand>
</feature>
<organism>
    <name type="scientific">Bacillus cereus (strain G9842)</name>
    <dbReference type="NCBI Taxonomy" id="405531"/>
    <lineage>
        <taxon>Bacteria</taxon>
        <taxon>Bacillati</taxon>
        <taxon>Bacillota</taxon>
        <taxon>Bacilli</taxon>
        <taxon>Bacillales</taxon>
        <taxon>Bacillaceae</taxon>
        <taxon>Bacillus</taxon>
        <taxon>Bacillus cereus group</taxon>
    </lineage>
</organism>
<keyword id="KW-0030">Aminoacyl-tRNA synthetase</keyword>
<keyword id="KW-0067">ATP-binding</keyword>
<keyword id="KW-0963">Cytoplasm</keyword>
<keyword id="KW-0436">Ligase</keyword>
<keyword id="KW-0479">Metal-binding</keyword>
<keyword id="KW-0547">Nucleotide-binding</keyword>
<keyword id="KW-0648">Protein biosynthesis</keyword>
<keyword id="KW-0862">Zinc</keyword>
<evidence type="ECO:0000255" key="1">
    <source>
        <dbReference type="HAMAP-Rule" id="MF_02002"/>
    </source>
</evidence>
<reference key="1">
    <citation type="submission" date="2008-10" db="EMBL/GenBank/DDBJ databases">
        <title>Genome sequence of Bacillus cereus G9842.</title>
        <authorList>
            <person name="Dodson R.J."/>
            <person name="Durkin A.S."/>
            <person name="Rosovitz M.J."/>
            <person name="Rasko D.A."/>
            <person name="Hoffmaster A."/>
            <person name="Ravel J."/>
            <person name="Sutton G."/>
        </authorList>
    </citation>
    <scope>NUCLEOTIDE SEQUENCE [LARGE SCALE GENOMIC DNA]</scope>
    <source>
        <strain>G9842</strain>
    </source>
</reference>
<proteinExistence type="inferred from homology"/>
<protein>
    <recommendedName>
        <fullName evidence="1">Isoleucine--tRNA ligase</fullName>
        <ecNumber evidence="1">6.1.1.5</ecNumber>
    </recommendedName>
    <alternativeName>
        <fullName evidence="1">Isoleucyl-tRNA synthetase</fullName>
        <shortName evidence="1">IleRS</shortName>
    </alternativeName>
</protein>
<dbReference type="EC" id="6.1.1.5" evidence="1"/>
<dbReference type="EMBL" id="CP001186">
    <property type="protein sequence ID" value="ACK94918.1"/>
    <property type="molecule type" value="Genomic_DNA"/>
</dbReference>
<dbReference type="SMR" id="B7IUQ5"/>
<dbReference type="KEGG" id="bcg:BCG9842_B1245"/>
<dbReference type="HOGENOM" id="CLU_001493_7_1_9"/>
<dbReference type="Proteomes" id="UP000006744">
    <property type="component" value="Chromosome"/>
</dbReference>
<dbReference type="GO" id="GO:0005829">
    <property type="term" value="C:cytosol"/>
    <property type="evidence" value="ECO:0007669"/>
    <property type="project" value="TreeGrafter"/>
</dbReference>
<dbReference type="GO" id="GO:0002161">
    <property type="term" value="F:aminoacyl-tRNA deacylase activity"/>
    <property type="evidence" value="ECO:0007669"/>
    <property type="project" value="InterPro"/>
</dbReference>
<dbReference type="GO" id="GO:0005524">
    <property type="term" value="F:ATP binding"/>
    <property type="evidence" value="ECO:0007669"/>
    <property type="project" value="UniProtKB-UniRule"/>
</dbReference>
<dbReference type="GO" id="GO:0004822">
    <property type="term" value="F:isoleucine-tRNA ligase activity"/>
    <property type="evidence" value="ECO:0007669"/>
    <property type="project" value="UniProtKB-UniRule"/>
</dbReference>
<dbReference type="GO" id="GO:0000049">
    <property type="term" value="F:tRNA binding"/>
    <property type="evidence" value="ECO:0007669"/>
    <property type="project" value="InterPro"/>
</dbReference>
<dbReference type="GO" id="GO:0008270">
    <property type="term" value="F:zinc ion binding"/>
    <property type="evidence" value="ECO:0007669"/>
    <property type="project" value="UniProtKB-UniRule"/>
</dbReference>
<dbReference type="GO" id="GO:0006428">
    <property type="term" value="P:isoleucyl-tRNA aminoacylation"/>
    <property type="evidence" value="ECO:0007669"/>
    <property type="project" value="UniProtKB-UniRule"/>
</dbReference>
<dbReference type="CDD" id="cd07960">
    <property type="entry name" value="Anticodon_Ia_Ile_BEm"/>
    <property type="match status" value="1"/>
</dbReference>
<dbReference type="CDD" id="cd00818">
    <property type="entry name" value="IleRS_core"/>
    <property type="match status" value="1"/>
</dbReference>
<dbReference type="FunFam" id="1.10.10.830:FF:000001">
    <property type="entry name" value="Isoleucine--tRNA ligase"/>
    <property type="match status" value="1"/>
</dbReference>
<dbReference type="FunFam" id="1.10.730.20:FF:000001">
    <property type="entry name" value="Isoleucine--tRNA ligase"/>
    <property type="match status" value="1"/>
</dbReference>
<dbReference type="FunFam" id="3.40.50.620:FF:000152">
    <property type="entry name" value="Isoleucine--tRNA ligase"/>
    <property type="match status" value="1"/>
</dbReference>
<dbReference type="FunFam" id="3.90.740.10:FF:000006">
    <property type="entry name" value="Isoleucine--tRNA ligase"/>
    <property type="match status" value="1"/>
</dbReference>
<dbReference type="Gene3D" id="1.10.730.20">
    <property type="match status" value="1"/>
</dbReference>
<dbReference type="Gene3D" id="3.40.50.620">
    <property type="entry name" value="HUPs"/>
    <property type="match status" value="2"/>
</dbReference>
<dbReference type="Gene3D" id="1.10.10.830">
    <property type="entry name" value="Ile-tRNA synthetase CP2 domain-like"/>
    <property type="match status" value="1"/>
</dbReference>
<dbReference type="Gene3D" id="3.90.740.10">
    <property type="entry name" value="Valyl/Leucyl/Isoleucyl-tRNA synthetase, editing domain"/>
    <property type="match status" value="1"/>
</dbReference>
<dbReference type="HAMAP" id="MF_02002">
    <property type="entry name" value="Ile_tRNA_synth_type1"/>
    <property type="match status" value="1"/>
</dbReference>
<dbReference type="InterPro" id="IPR001412">
    <property type="entry name" value="aa-tRNA-synth_I_CS"/>
</dbReference>
<dbReference type="InterPro" id="IPR002300">
    <property type="entry name" value="aa-tRNA-synth_Ia"/>
</dbReference>
<dbReference type="InterPro" id="IPR033708">
    <property type="entry name" value="Anticodon_Ile_BEm"/>
</dbReference>
<dbReference type="InterPro" id="IPR002301">
    <property type="entry name" value="Ile-tRNA-ligase"/>
</dbReference>
<dbReference type="InterPro" id="IPR023585">
    <property type="entry name" value="Ile-tRNA-ligase_type1"/>
</dbReference>
<dbReference type="InterPro" id="IPR050081">
    <property type="entry name" value="Ile-tRNA_ligase"/>
</dbReference>
<dbReference type="InterPro" id="IPR013155">
    <property type="entry name" value="M/V/L/I-tRNA-synth_anticd-bd"/>
</dbReference>
<dbReference type="InterPro" id="IPR014729">
    <property type="entry name" value="Rossmann-like_a/b/a_fold"/>
</dbReference>
<dbReference type="InterPro" id="IPR009080">
    <property type="entry name" value="tRNAsynth_Ia_anticodon-bd"/>
</dbReference>
<dbReference type="InterPro" id="IPR009008">
    <property type="entry name" value="Val/Leu/Ile-tRNA-synth_edit"/>
</dbReference>
<dbReference type="InterPro" id="IPR010663">
    <property type="entry name" value="Znf_FPG/IleRS"/>
</dbReference>
<dbReference type="NCBIfam" id="TIGR00392">
    <property type="entry name" value="ileS"/>
    <property type="match status" value="1"/>
</dbReference>
<dbReference type="PANTHER" id="PTHR42765:SF1">
    <property type="entry name" value="ISOLEUCINE--TRNA LIGASE, MITOCHONDRIAL"/>
    <property type="match status" value="1"/>
</dbReference>
<dbReference type="PANTHER" id="PTHR42765">
    <property type="entry name" value="SOLEUCYL-TRNA SYNTHETASE"/>
    <property type="match status" value="1"/>
</dbReference>
<dbReference type="Pfam" id="PF08264">
    <property type="entry name" value="Anticodon_1"/>
    <property type="match status" value="1"/>
</dbReference>
<dbReference type="Pfam" id="PF00133">
    <property type="entry name" value="tRNA-synt_1"/>
    <property type="match status" value="1"/>
</dbReference>
<dbReference type="Pfam" id="PF06827">
    <property type="entry name" value="zf-FPG_IleRS"/>
    <property type="match status" value="1"/>
</dbReference>
<dbReference type="PRINTS" id="PR00984">
    <property type="entry name" value="TRNASYNTHILE"/>
</dbReference>
<dbReference type="SUPFAM" id="SSF47323">
    <property type="entry name" value="Anticodon-binding domain of a subclass of class I aminoacyl-tRNA synthetases"/>
    <property type="match status" value="1"/>
</dbReference>
<dbReference type="SUPFAM" id="SSF52374">
    <property type="entry name" value="Nucleotidylyl transferase"/>
    <property type="match status" value="1"/>
</dbReference>
<dbReference type="SUPFAM" id="SSF50677">
    <property type="entry name" value="ValRS/IleRS/LeuRS editing domain"/>
    <property type="match status" value="1"/>
</dbReference>
<dbReference type="PROSITE" id="PS00178">
    <property type="entry name" value="AA_TRNA_LIGASE_I"/>
    <property type="match status" value="1"/>
</dbReference>
<accession>B7IUQ5</accession>
<name>SYI_BACC2</name>
<comment type="function">
    <text evidence="1">Catalyzes the attachment of isoleucine to tRNA(Ile). As IleRS can inadvertently accommodate and process structurally similar amino acids such as valine, to avoid such errors it has two additional distinct tRNA(Ile)-dependent editing activities. One activity is designated as 'pretransfer' editing and involves the hydrolysis of activated Val-AMP. The other activity is designated 'posttransfer' editing and involves deacylation of mischarged Val-tRNA(Ile).</text>
</comment>
<comment type="catalytic activity">
    <reaction evidence="1">
        <text>tRNA(Ile) + L-isoleucine + ATP = L-isoleucyl-tRNA(Ile) + AMP + diphosphate</text>
        <dbReference type="Rhea" id="RHEA:11060"/>
        <dbReference type="Rhea" id="RHEA-COMP:9666"/>
        <dbReference type="Rhea" id="RHEA-COMP:9695"/>
        <dbReference type="ChEBI" id="CHEBI:30616"/>
        <dbReference type="ChEBI" id="CHEBI:33019"/>
        <dbReference type="ChEBI" id="CHEBI:58045"/>
        <dbReference type="ChEBI" id="CHEBI:78442"/>
        <dbReference type="ChEBI" id="CHEBI:78528"/>
        <dbReference type="ChEBI" id="CHEBI:456215"/>
        <dbReference type="EC" id="6.1.1.5"/>
    </reaction>
</comment>
<comment type="cofactor">
    <cofactor evidence="1">
        <name>Zn(2+)</name>
        <dbReference type="ChEBI" id="CHEBI:29105"/>
    </cofactor>
    <text evidence="1">Binds 1 zinc ion per subunit.</text>
</comment>
<comment type="subunit">
    <text evidence="1">Monomer.</text>
</comment>
<comment type="subcellular location">
    <subcellularLocation>
        <location evidence="1">Cytoplasm</location>
    </subcellularLocation>
</comment>
<comment type="domain">
    <text evidence="1">IleRS has two distinct active sites: one for aminoacylation and one for editing. The misactivated valine is translocated from the active site to the editing site, which sterically excludes the correctly activated isoleucine. The single editing site contains two valyl binding pockets, one specific for each substrate (Val-AMP or Val-tRNA(Ile)).</text>
</comment>
<comment type="similarity">
    <text evidence="1">Belongs to the class-I aminoacyl-tRNA synthetase family. IleS type 1 subfamily.</text>
</comment>
<sequence>MEYKNTLLMPKTEFPMRGNLPKREPAMQEKWAEMNIYEKVQEHTKGRPLFVLHDGPPYANGDIHMGHALNKVLKDFIVRYKSMTGFSAPYVPGWDTHGLPIEQALTNKGVKRKEMTVAEFRKLCAEYAYEQVERQREQFKRLGVRADWDNPYITLEPAYEAQQIKVFGDMAKKGYIYKGQKPVYWSPTSESALAEAEIEYQDKKSASIYVAFPVKDGKNVLEGDEKYIIWTTTPWTLPANLGISVHPELEYSIVKVNDEKYIIASELFETVAKTLEWENAEVVKTVKGSELEYTVAKHPFYDRDSLVMLGDHVTTDAGTGCVHTAPGHGEDDFVVGKKYGLEVLCPVDDKGVLTNEAPGFEGLFYDKANKPITEKLEEVGALLKLTFITHSYPHDWRTKKPIIFRATAQWFASIEAFRKELIEAVAETKWVPAWGETRLHNMVRDRGDWCISRQRAWGVPIPVFYAENGDPIITDETINHVADLFREHGSNVWFEREAKDLLPEGFTHPGSPNGEFRKETDIMDVWFDSGSSHQAVLEEREDLQRPADLYLEGSDQYRGWFNSSLSTAVAVTGKAPYKGVLSHGFVLDGEGRKMSKSIGNIVVPKKIMDQLGGDILRLWVSSVDYQSDVRISDDILKQVAEVYRKIRNTFRFLLGNLDDFKPSENAVAVAELREVDRYMLVKLNDLITKVKEAYETYDFAAVYHAIHNFCTIDLSSFYLDFAKDILYIEGANHEDRRAIQTVLYDVLVALTKLVTPILPHTADEVWPYIPGVTEESVQLTDMPEAVQLYDAEALKTKWDAFMTLRDDVLKALEVARNEKVIGKSLNASITLYPTAEMKAMLESISEDLKQLFIVSEYKLGGMMEEAPADAPKYEHTAVVVAQATGETCERCWVVSETIGKDAEHETLCERCATVVKENYVK</sequence>